<evidence type="ECO:0000250" key="1"/>
<evidence type="ECO:0000250" key="2">
    <source>
        <dbReference type="UniProtKB" id="P17028"/>
    </source>
</evidence>
<evidence type="ECO:0000255" key="3">
    <source>
        <dbReference type="PROSITE-ProRule" id="PRU00042"/>
    </source>
</evidence>
<evidence type="ECO:0000255" key="4">
    <source>
        <dbReference type="PROSITE-ProRule" id="PRU00187"/>
    </source>
</evidence>
<evidence type="ECO:0000305" key="5"/>
<protein>
    <recommendedName>
        <fullName>Zinc finger protein 24</fullName>
    </recommendedName>
</protein>
<accession>A2T7D7</accession>
<sequence length="368" mass="42062">MSAQSVEEDSILIIPTPDEEEKILRVKLEEDPDGEEGSSIPWNHLPDPEIFRQRFRQFGYQDSPGPREAVSQLRELCRLWLRPETHTKEQILELVVLEQFVAILPKELQTWVRDHHPENGEEAVTVLEDLESELDDPGQPVSLRRRKREVLVEDMVSQEEAQGLPSSELDAVENQLKWASWELHSLRHCDDDGRTENGALAPKQELPSAVESHEVPGTLNMGVPQIFKYGETCFPKGRFERKRNPSRKKQHICDECGKHFSQGSALILHQRIHSGEKPYGCVECGKAFSRSSILVQHQRVHTGEKPYKCLECGKAFSQNSGLINHQRIHTGEKPYECVQCGKSYSQSSNLFRHXXRHNAXKLLNVVKV</sequence>
<name>ZNF24_PANTR</name>
<dbReference type="EMBL" id="DQ977425">
    <property type="protein sequence ID" value="ABM92092.1"/>
    <property type="molecule type" value="Genomic_DNA"/>
</dbReference>
<dbReference type="FunCoup" id="A2T7D7">
    <property type="interactions" value="2502"/>
</dbReference>
<dbReference type="STRING" id="9598.ENSPTRP00000016949"/>
<dbReference type="PaxDb" id="9598-ENSPTRP00000016949"/>
<dbReference type="eggNOG" id="KOG1721">
    <property type="taxonomic scope" value="Eukaryota"/>
</dbReference>
<dbReference type="InParanoid" id="A2T7D7"/>
<dbReference type="Proteomes" id="UP000002277">
    <property type="component" value="Unplaced"/>
</dbReference>
<dbReference type="GO" id="GO:0005634">
    <property type="term" value="C:nucleus"/>
    <property type="evidence" value="ECO:0000250"/>
    <property type="project" value="UniProtKB"/>
</dbReference>
<dbReference type="GO" id="GO:0000981">
    <property type="term" value="F:DNA-binding transcription factor activity, RNA polymerase II-specific"/>
    <property type="evidence" value="ECO:0000318"/>
    <property type="project" value="GO_Central"/>
</dbReference>
<dbReference type="GO" id="GO:0000978">
    <property type="term" value="F:RNA polymerase II cis-regulatory region sequence-specific DNA binding"/>
    <property type="evidence" value="ECO:0000318"/>
    <property type="project" value="GO_Central"/>
</dbReference>
<dbReference type="GO" id="GO:0043565">
    <property type="term" value="F:sequence-specific DNA binding"/>
    <property type="evidence" value="ECO:0000250"/>
    <property type="project" value="UniProtKB"/>
</dbReference>
<dbReference type="GO" id="GO:0008270">
    <property type="term" value="F:zinc ion binding"/>
    <property type="evidence" value="ECO:0007669"/>
    <property type="project" value="UniProtKB-KW"/>
</dbReference>
<dbReference type="GO" id="GO:0042552">
    <property type="term" value="P:myelination"/>
    <property type="evidence" value="ECO:0000250"/>
    <property type="project" value="UniProtKB"/>
</dbReference>
<dbReference type="GO" id="GO:0006357">
    <property type="term" value="P:regulation of transcription by RNA polymerase II"/>
    <property type="evidence" value="ECO:0000318"/>
    <property type="project" value="GO_Central"/>
</dbReference>
<dbReference type="CDD" id="cd07936">
    <property type="entry name" value="SCAN"/>
    <property type="match status" value="1"/>
</dbReference>
<dbReference type="FunFam" id="3.30.160.60:FF:000824">
    <property type="entry name" value="Zinc finger protein 184"/>
    <property type="match status" value="1"/>
</dbReference>
<dbReference type="FunFam" id="3.30.160.60:FF:000358">
    <property type="entry name" value="zinc finger protein 24"/>
    <property type="match status" value="1"/>
</dbReference>
<dbReference type="FunFam" id="3.30.160.60:FF:000632">
    <property type="entry name" value="zinc finger protein 24 isoform X1"/>
    <property type="match status" value="1"/>
</dbReference>
<dbReference type="FunFam" id="1.10.4020.10:FF:000001">
    <property type="entry name" value="zinc finger protein 263 isoform X1"/>
    <property type="match status" value="1"/>
</dbReference>
<dbReference type="FunFam" id="3.30.160.60:FF:002343">
    <property type="entry name" value="Zinc finger protein 33A"/>
    <property type="match status" value="1"/>
</dbReference>
<dbReference type="Gene3D" id="3.30.160.60">
    <property type="entry name" value="Classic Zinc Finger"/>
    <property type="match status" value="4"/>
</dbReference>
<dbReference type="Gene3D" id="1.10.4020.10">
    <property type="entry name" value="DNA breaking-rejoining enzymes"/>
    <property type="match status" value="1"/>
</dbReference>
<dbReference type="InterPro" id="IPR003309">
    <property type="entry name" value="SCAN_dom"/>
</dbReference>
<dbReference type="InterPro" id="IPR038269">
    <property type="entry name" value="SCAN_sf"/>
</dbReference>
<dbReference type="InterPro" id="IPR036236">
    <property type="entry name" value="Znf_C2H2_sf"/>
</dbReference>
<dbReference type="InterPro" id="IPR013087">
    <property type="entry name" value="Znf_C2H2_type"/>
</dbReference>
<dbReference type="PANTHER" id="PTHR23235">
    <property type="entry name" value="KRUEPPEL-LIKE TRANSCRIPTION FACTOR"/>
    <property type="match status" value="1"/>
</dbReference>
<dbReference type="PANTHER" id="PTHR23235:SF142">
    <property type="entry name" value="ZINC FINGER PROTEIN 384"/>
    <property type="match status" value="1"/>
</dbReference>
<dbReference type="Pfam" id="PF02023">
    <property type="entry name" value="SCAN"/>
    <property type="match status" value="1"/>
</dbReference>
<dbReference type="Pfam" id="PF00096">
    <property type="entry name" value="zf-C2H2"/>
    <property type="match status" value="4"/>
</dbReference>
<dbReference type="SMART" id="SM00431">
    <property type="entry name" value="SCAN"/>
    <property type="match status" value="1"/>
</dbReference>
<dbReference type="SMART" id="SM00355">
    <property type="entry name" value="ZnF_C2H2"/>
    <property type="match status" value="4"/>
</dbReference>
<dbReference type="SUPFAM" id="SSF57667">
    <property type="entry name" value="beta-beta-alpha zinc fingers"/>
    <property type="match status" value="3"/>
</dbReference>
<dbReference type="SUPFAM" id="SSF47353">
    <property type="entry name" value="Retrovirus capsid dimerization domain-like"/>
    <property type="match status" value="1"/>
</dbReference>
<dbReference type="PROSITE" id="PS50804">
    <property type="entry name" value="SCAN_BOX"/>
    <property type="match status" value="1"/>
</dbReference>
<dbReference type="PROSITE" id="PS00028">
    <property type="entry name" value="ZINC_FINGER_C2H2_1"/>
    <property type="match status" value="4"/>
</dbReference>
<dbReference type="PROSITE" id="PS50157">
    <property type="entry name" value="ZINC_FINGER_C2H2_2"/>
    <property type="match status" value="4"/>
</dbReference>
<reference key="1">
    <citation type="submission" date="2006-08" db="EMBL/GenBank/DDBJ databases">
        <title>Positive selection in transcription factor genes on the human lineage.</title>
        <authorList>
            <person name="Nickel G.C."/>
            <person name="Tefft D.L."/>
            <person name="Trevarthen K."/>
            <person name="Funt J."/>
            <person name="Adams M.D."/>
        </authorList>
    </citation>
    <scope>NUCLEOTIDE SEQUENCE [GENOMIC DNA]</scope>
</reference>
<proteinExistence type="inferred from homology"/>
<keyword id="KW-0238">DNA-binding</keyword>
<keyword id="KW-1017">Isopeptide bond</keyword>
<keyword id="KW-0479">Metal-binding</keyword>
<keyword id="KW-0539">Nucleus</keyword>
<keyword id="KW-0597">Phosphoprotein</keyword>
<keyword id="KW-1185">Reference proteome</keyword>
<keyword id="KW-0677">Repeat</keyword>
<keyword id="KW-0678">Repressor</keyword>
<keyword id="KW-0804">Transcription</keyword>
<keyword id="KW-0805">Transcription regulation</keyword>
<keyword id="KW-0832">Ubl conjugation</keyword>
<keyword id="KW-0862">Zinc</keyword>
<keyword id="KW-0863">Zinc-finger</keyword>
<comment type="function">
    <text evidence="1">Transcription factor required for myelination of differentiated oligodendrocytes. Required for the conversion of oligodendrocytes from the premyelinating to the myelinating state. In the developing central nervous system (CNS), involved in the maintenance in the progenitor stage by promoting the cell cycle. Specifically binds to the 5'-TCAT-3' DNA sequence. Has transcription repressor activity in vitro (By similarity).</text>
</comment>
<comment type="subcellular location">
    <subcellularLocation>
        <location evidence="4">Nucleus</location>
    </subcellularLocation>
</comment>
<comment type="PTM">
    <text evidence="1">Sumoylated.</text>
</comment>
<comment type="similarity">
    <text evidence="5">Belongs to the krueppel C2H2-type zinc-finger protein family.</text>
</comment>
<feature type="chain" id="PRO_0000285469" description="Zinc finger protein 24">
    <location>
        <begin position="1"/>
        <end position="368"/>
    </location>
</feature>
<feature type="domain" description="SCAN box" evidence="4">
    <location>
        <begin position="52"/>
        <end position="134"/>
    </location>
</feature>
<feature type="zinc finger region" description="C2H2-type 1" evidence="3">
    <location>
        <begin position="251"/>
        <end position="273"/>
    </location>
</feature>
<feature type="zinc finger region" description="C2H2-type 2" evidence="3">
    <location>
        <begin position="279"/>
        <end position="301"/>
    </location>
</feature>
<feature type="zinc finger region" description="C2H2-type 3" evidence="3">
    <location>
        <begin position="307"/>
        <end position="329"/>
    </location>
</feature>
<feature type="zinc finger region" description="C2H2-type 4" evidence="3">
    <location>
        <begin position="335"/>
        <end position="357"/>
    </location>
</feature>
<feature type="region of interest" description="Necessary and sufficient for nuclear localization" evidence="1">
    <location>
        <begin position="251"/>
        <end position="301"/>
    </location>
</feature>
<feature type="modified residue" description="Phosphoserine" evidence="2">
    <location>
        <position position="132"/>
    </location>
</feature>
<feature type="modified residue" description="Phosphoserine" evidence="2">
    <location>
        <position position="142"/>
    </location>
</feature>
<feature type="modified residue" description="Phosphoserine" evidence="2">
    <location>
        <position position="274"/>
    </location>
</feature>
<feature type="modified residue" description="Phosphoserine" evidence="2">
    <location>
        <position position="292"/>
    </location>
</feature>
<feature type="modified residue" description="Phosphotyrosine" evidence="2">
    <location>
        <position position="335"/>
    </location>
</feature>
<feature type="cross-link" description="Glycyl lysine isopeptide (Lys-Gly) (interchain with G-Cter in SUMO2)" evidence="2">
    <location>
        <position position="22"/>
    </location>
</feature>
<feature type="cross-link" description="Glycyl lysine isopeptide (Lys-Gly) (interchain with G-Cter in SUMO1); alternate" evidence="2">
    <location>
        <position position="27"/>
    </location>
</feature>
<feature type="cross-link" description="Glycyl lysine isopeptide (Lys-Gly) (interchain with G-Cter in SUMO2); alternate" evidence="2">
    <location>
        <position position="27"/>
    </location>
</feature>
<feature type="cross-link" description="Glycyl lysine isopeptide (Lys-Gly) (interchain with G-Cter in SUMO2)" evidence="2">
    <location>
        <position position="147"/>
    </location>
</feature>
<feature type="cross-link" description="Glycyl lysine isopeptide (Lys-Gly) (interchain with G-Cter in SUMO2)" evidence="2">
    <location>
        <position position="177"/>
    </location>
</feature>
<feature type="cross-link" description="Glycyl lysine isopeptide (Lys-Gly) (interchain with G-Cter in SUMO2)" evidence="2">
    <location>
        <position position="236"/>
    </location>
</feature>
<feature type="cross-link" description="Glycyl lysine isopeptide (Lys-Gly) (interchain with G-Cter in SUMO2)" evidence="2">
    <location>
        <position position="277"/>
    </location>
</feature>
<feature type="cross-link" description="Glycyl lysine isopeptide (Lys-Gly) (interchain with G-Cter in SUMO2)" evidence="2">
    <location>
        <position position="286"/>
    </location>
</feature>
<feature type="cross-link" description="Glycyl lysine isopeptide (Lys-Gly) (interchain with G-Cter in SUMO2)" evidence="2">
    <location>
        <position position="361"/>
    </location>
</feature>
<feature type="cross-link" description="Glycyl lysine isopeptide (Lys-Gly) (interchain with G-Cter in SUMO2)" evidence="2">
    <location>
        <position position="367"/>
    </location>
</feature>
<gene>
    <name type="primary">ZNF24</name>
</gene>
<organism>
    <name type="scientific">Pan troglodytes</name>
    <name type="common">Chimpanzee</name>
    <dbReference type="NCBI Taxonomy" id="9598"/>
    <lineage>
        <taxon>Eukaryota</taxon>
        <taxon>Metazoa</taxon>
        <taxon>Chordata</taxon>
        <taxon>Craniata</taxon>
        <taxon>Vertebrata</taxon>
        <taxon>Euteleostomi</taxon>
        <taxon>Mammalia</taxon>
        <taxon>Eutheria</taxon>
        <taxon>Euarchontoglires</taxon>
        <taxon>Primates</taxon>
        <taxon>Haplorrhini</taxon>
        <taxon>Catarrhini</taxon>
        <taxon>Hominidae</taxon>
        <taxon>Pan</taxon>
    </lineage>
</organism>